<sequence length="299" mass="30955">MSGPNPPGREPDEPESEPVSDTGDERASGNHLPPVAGGGDKLPSDQTGETDAYSRAYSAPESEHVTGGPYVPADLRLYDYDDYEESSDLDDELAAPRWPWVVGVAAIIAAVALVVSVSLLVTRPHTSKLATGDTTSSAPPVQDEITTTKPAPPPPPPAPPPTTEIPTATETQTVTVTPPPPPPPATTTAPPPATTTTAAAPPPTTTTPTGPRQVTYSVTGTKAPGDIISVTYVDAAGRRRTQHNVYIPWSMTVTPISQSDVGSVEASSLFRVSKLNCSITTSDGTVLSSNSNDGPQTSC</sequence>
<gene>
    <name type="primary">mmpS3</name>
    <name type="ordered locus">Rv2198c</name>
    <name type="ORF">MTCY190.09c</name>
</gene>
<evidence type="ECO:0000255" key="1"/>
<evidence type="ECO:0000256" key="2">
    <source>
        <dbReference type="SAM" id="MobiDB-lite"/>
    </source>
</evidence>
<evidence type="ECO:0000305" key="3"/>
<evidence type="ECO:0007744" key="4">
    <source>
    </source>
</evidence>
<comment type="subcellular location">
    <subcellularLocation>
        <location evidence="3">Cell membrane</location>
        <topology evidence="1">Single-pass membrane protein</topology>
    </subcellularLocation>
</comment>
<comment type="similarity">
    <text evidence="3">Belongs to the MmpS family.</text>
</comment>
<feature type="initiator methionine" description="Removed" evidence="4">
    <location>
        <position position="1"/>
    </location>
</feature>
<feature type="chain" id="PRO_0000216155" description="Probable transport accessory protein MmpS3">
    <location>
        <begin position="2"/>
        <end position="299"/>
    </location>
</feature>
<feature type="transmembrane region" description="Helical" evidence="1">
    <location>
        <begin position="101"/>
        <end position="121"/>
    </location>
</feature>
<feature type="region of interest" description="Disordered" evidence="2">
    <location>
        <begin position="1"/>
        <end position="72"/>
    </location>
</feature>
<feature type="region of interest" description="Disordered" evidence="2">
    <location>
        <begin position="128"/>
        <end position="213"/>
    </location>
</feature>
<feature type="compositionally biased region" description="Polar residues" evidence="2">
    <location>
        <begin position="128"/>
        <end position="139"/>
    </location>
</feature>
<feature type="compositionally biased region" description="Pro residues" evidence="2">
    <location>
        <begin position="150"/>
        <end position="163"/>
    </location>
</feature>
<feature type="compositionally biased region" description="Low complexity" evidence="2">
    <location>
        <begin position="164"/>
        <end position="176"/>
    </location>
</feature>
<feature type="compositionally biased region" description="Pro residues" evidence="2">
    <location>
        <begin position="177"/>
        <end position="193"/>
    </location>
</feature>
<feature type="modified residue" description="N-acetylserine" evidence="4">
    <location>
        <position position="2"/>
    </location>
</feature>
<reference key="1">
    <citation type="journal article" date="1998" name="Nature">
        <title>Deciphering the biology of Mycobacterium tuberculosis from the complete genome sequence.</title>
        <authorList>
            <person name="Cole S.T."/>
            <person name="Brosch R."/>
            <person name="Parkhill J."/>
            <person name="Garnier T."/>
            <person name="Churcher C.M."/>
            <person name="Harris D.E."/>
            <person name="Gordon S.V."/>
            <person name="Eiglmeier K."/>
            <person name="Gas S."/>
            <person name="Barry C.E. III"/>
            <person name="Tekaia F."/>
            <person name="Badcock K."/>
            <person name="Basham D."/>
            <person name="Brown D."/>
            <person name="Chillingworth T."/>
            <person name="Connor R."/>
            <person name="Davies R.M."/>
            <person name="Devlin K."/>
            <person name="Feltwell T."/>
            <person name="Gentles S."/>
            <person name="Hamlin N."/>
            <person name="Holroyd S."/>
            <person name="Hornsby T."/>
            <person name="Jagels K."/>
            <person name="Krogh A."/>
            <person name="McLean J."/>
            <person name="Moule S."/>
            <person name="Murphy L.D."/>
            <person name="Oliver S."/>
            <person name="Osborne J."/>
            <person name="Quail M.A."/>
            <person name="Rajandream M.A."/>
            <person name="Rogers J."/>
            <person name="Rutter S."/>
            <person name="Seeger K."/>
            <person name="Skelton S."/>
            <person name="Squares S."/>
            <person name="Squares R."/>
            <person name="Sulston J.E."/>
            <person name="Taylor K."/>
            <person name="Whitehead S."/>
            <person name="Barrell B.G."/>
        </authorList>
    </citation>
    <scope>NUCLEOTIDE SEQUENCE [LARGE SCALE GENOMIC DNA]</scope>
    <source>
        <strain>ATCC 25618 / H37Rv</strain>
    </source>
</reference>
<reference key="2">
    <citation type="journal article" date="2011" name="Mol. Cell. Proteomics">
        <title>Proteogenomic analysis of Mycobacterium tuberculosis by high resolution mass spectrometry.</title>
        <authorList>
            <person name="Kelkar D.S."/>
            <person name="Kumar D."/>
            <person name="Kumar P."/>
            <person name="Balakrishnan L."/>
            <person name="Muthusamy B."/>
            <person name="Yadav A.K."/>
            <person name="Shrivastava P."/>
            <person name="Marimuthu A."/>
            <person name="Anand S."/>
            <person name="Sundaram H."/>
            <person name="Kingsbury R."/>
            <person name="Harsha H.C."/>
            <person name="Nair B."/>
            <person name="Prasad T.S."/>
            <person name="Chauhan D.S."/>
            <person name="Katoch K."/>
            <person name="Katoch V.M."/>
            <person name="Kumar P."/>
            <person name="Chaerkady R."/>
            <person name="Ramachandran S."/>
            <person name="Dash D."/>
            <person name="Pandey A."/>
        </authorList>
    </citation>
    <scope>ACETYLATION [LARGE SCALE ANALYSIS] AT SER-2</scope>
    <scope>CLEAVAGE OF INITIATOR METHIONINE [LARGE SCALE ANALYSIS]</scope>
    <scope>IDENTIFICATION BY MASS SPECTROMETRY [LARGE SCALE ANALYSIS]</scope>
    <source>
        <strain>ATCC 25618 / H37Rv</strain>
    </source>
</reference>
<organism>
    <name type="scientific">Mycobacterium tuberculosis (strain ATCC 25618 / H37Rv)</name>
    <dbReference type="NCBI Taxonomy" id="83332"/>
    <lineage>
        <taxon>Bacteria</taxon>
        <taxon>Bacillati</taxon>
        <taxon>Actinomycetota</taxon>
        <taxon>Actinomycetes</taxon>
        <taxon>Mycobacteriales</taxon>
        <taxon>Mycobacteriaceae</taxon>
        <taxon>Mycobacterium</taxon>
        <taxon>Mycobacterium tuberculosis complex</taxon>
    </lineage>
</organism>
<protein>
    <recommendedName>
        <fullName>Probable transport accessory protein MmpS3</fullName>
    </recommendedName>
</protein>
<accession>P9WJT1</accession>
<accession>L0T944</accession>
<accession>P65378</accession>
<accession>Q10390</accession>
<proteinExistence type="evidence at protein level"/>
<dbReference type="EMBL" id="AL123456">
    <property type="protein sequence ID" value="CCP44975.1"/>
    <property type="molecule type" value="Genomic_DNA"/>
</dbReference>
<dbReference type="PIR" id="G70784">
    <property type="entry name" value="G70784"/>
</dbReference>
<dbReference type="RefSeq" id="NP_216714.1">
    <property type="nucleotide sequence ID" value="NC_000962.3"/>
</dbReference>
<dbReference type="RefSeq" id="WP_003411405.1">
    <property type="nucleotide sequence ID" value="NZ_NVQJ01000008.1"/>
</dbReference>
<dbReference type="SMR" id="P9WJT1"/>
<dbReference type="STRING" id="83332.Rv2198c"/>
<dbReference type="iPTMnet" id="P9WJT1"/>
<dbReference type="PaxDb" id="83332-Rv2198c"/>
<dbReference type="DNASU" id="887471"/>
<dbReference type="GeneID" id="887471"/>
<dbReference type="KEGG" id="mtu:Rv2198c"/>
<dbReference type="KEGG" id="mtv:RVBD_2198c"/>
<dbReference type="PATRIC" id="fig|83332.111.peg.2445"/>
<dbReference type="TubercuList" id="Rv2198c"/>
<dbReference type="eggNOG" id="ENOG5030RVM">
    <property type="taxonomic scope" value="Bacteria"/>
</dbReference>
<dbReference type="InParanoid" id="P9WJT1"/>
<dbReference type="OrthoDB" id="4761962at2"/>
<dbReference type="Proteomes" id="UP000001584">
    <property type="component" value="Chromosome"/>
</dbReference>
<dbReference type="GO" id="GO:0009274">
    <property type="term" value="C:peptidoglycan-based cell wall"/>
    <property type="evidence" value="ECO:0007005"/>
    <property type="project" value="MTBBASE"/>
</dbReference>
<dbReference type="GO" id="GO:0005886">
    <property type="term" value="C:plasma membrane"/>
    <property type="evidence" value="ECO:0007005"/>
    <property type="project" value="MTBBASE"/>
</dbReference>
<dbReference type="FunFam" id="2.60.40.2880:FF:000001">
    <property type="entry name" value="Conserved membrane protein MmpS3"/>
    <property type="match status" value="1"/>
</dbReference>
<dbReference type="Gene3D" id="2.60.40.2880">
    <property type="entry name" value="MmpS1-5, C-terminal soluble domain"/>
    <property type="match status" value="1"/>
</dbReference>
<dbReference type="InterPro" id="IPR008693">
    <property type="entry name" value="MmpS"/>
</dbReference>
<dbReference type="InterPro" id="IPR038468">
    <property type="entry name" value="MmpS_C"/>
</dbReference>
<dbReference type="Pfam" id="PF05423">
    <property type="entry name" value="Mycobact_memb"/>
    <property type="match status" value="1"/>
</dbReference>
<name>MMPS3_MYCTU</name>
<keyword id="KW-0007">Acetylation</keyword>
<keyword id="KW-1003">Cell membrane</keyword>
<keyword id="KW-0472">Membrane</keyword>
<keyword id="KW-1185">Reference proteome</keyword>
<keyword id="KW-0812">Transmembrane</keyword>
<keyword id="KW-1133">Transmembrane helix</keyword>